<feature type="chain" id="PRO_1000006814" description="Phenylalanine--tRNA ligase alpha subunit">
    <location>
        <begin position="1"/>
        <end position="339"/>
    </location>
</feature>
<feature type="binding site" evidence="1">
    <location>
        <position position="254"/>
    </location>
    <ligand>
        <name>Mg(2+)</name>
        <dbReference type="ChEBI" id="CHEBI:18420"/>
        <note>shared with beta subunit</note>
    </ligand>
</feature>
<gene>
    <name evidence="1" type="primary">pheS</name>
    <name type="ordered locus">CLB_3161</name>
</gene>
<proteinExistence type="inferred from homology"/>
<accession>A7FY80</accession>
<comment type="catalytic activity">
    <reaction evidence="1">
        <text>tRNA(Phe) + L-phenylalanine + ATP = L-phenylalanyl-tRNA(Phe) + AMP + diphosphate + H(+)</text>
        <dbReference type="Rhea" id="RHEA:19413"/>
        <dbReference type="Rhea" id="RHEA-COMP:9668"/>
        <dbReference type="Rhea" id="RHEA-COMP:9699"/>
        <dbReference type="ChEBI" id="CHEBI:15378"/>
        <dbReference type="ChEBI" id="CHEBI:30616"/>
        <dbReference type="ChEBI" id="CHEBI:33019"/>
        <dbReference type="ChEBI" id="CHEBI:58095"/>
        <dbReference type="ChEBI" id="CHEBI:78442"/>
        <dbReference type="ChEBI" id="CHEBI:78531"/>
        <dbReference type="ChEBI" id="CHEBI:456215"/>
        <dbReference type="EC" id="6.1.1.20"/>
    </reaction>
</comment>
<comment type="cofactor">
    <cofactor evidence="1">
        <name>Mg(2+)</name>
        <dbReference type="ChEBI" id="CHEBI:18420"/>
    </cofactor>
    <text evidence="1">Binds 2 magnesium ions per tetramer.</text>
</comment>
<comment type="subunit">
    <text evidence="1">Tetramer of two alpha and two beta subunits.</text>
</comment>
<comment type="subcellular location">
    <subcellularLocation>
        <location evidence="1">Cytoplasm</location>
    </subcellularLocation>
</comment>
<comment type="similarity">
    <text evidence="1">Belongs to the class-II aminoacyl-tRNA synthetase family. Phe-tRNA synthetase alpha subunit type 1 subfamily.</text>
</comment>
<dbReference type="EC" id="6.1.1.20" evidence="1"/>
<dbReference type="EMBL" id="CP000726">
    <property type="protein sequence ID" value="ABS34964.1"/>
    <property type="molecule type" value="Genomic_DNA"/>
</dbReference>
<dbReference type="RefSeq" id="WP_003403382.1">
    <property type="nucleotide sequence ID" value="NC_009697.1"/>
</dbReference>
<dbReference type="SMR" id="A7FY80"/>
<dbReference type="GeneID" id="5185223"/>
<dbReference type="KEGG" id="cba:CLB_3161"/>
<dbReference type="HOGENOM" id="CLU_025086_0_1_9"/>
<dbReference type="GO" id="GO:0005737">
    <property type="term" value="C:cytoplasm"/>
    <property type="evidence" value="ECO:0007669"/>
    <property type="project" value="UniProtKB-SubCell"/>
</dbReference>
<dbReference type="GO" id="GO:0005524">
    <property type="term" value="F:ATP binding"/>
    <property type="evidence" value="ECO:0007669"/>
    <property type="project" value="UniProtKB-UniRule"/>
</dbReference>
<dbReference type="GO" id="GO:0140096">
    <property type="term" value="F:catalytic activity, acting on a protein"/>
    <property type="evidence" value="ECO:0007669"/>
    <property type="project" value="UniProtKB-ARBA"/>
</dbReference>
<dbReference type="GO" id="GO:0000287">
    <property type="term" value="F:magnesium ion binding"/>
    <property type="evidence" value="ECO:0007669"/>
    <property type="project" value="UniProtKB-UniRule"/>
</dbReference>
<dbReference type="GO" id="GO:0004826">
    <property type="term" value="F:phenylalanine-tRNA ligase activity"/>
    <property type="evidence" value="ECO:0007669"/>
    <property type="project" value="UniProtKB-UniRule"/>
</dbReference>
<dbReference type="GO" id="GO:0016740">
    <property type="term" value="F:transferase activity"/>
    <property type="evidence" value="ECO:0007669"/>
    <property type="project" value="UniProtKB-ARBA"/>
</dbReference>
<dbReference type="GO" id="GO:0000049">
    <property type="term" value="F:tRNA binding"/>
    <property type="evidence" value="ECO:0007669"/>
    <property type="project" value="InterPro"/>
</dbReference>
<dbReference type="GO" id="GO:0006432">
    <property type="term" value="P:phenylalanyl-tRNA aminoacylation"/>
    <property type="evidence" value="ECO:0007669"/>
    <property type="project" value="UniProtKB-UniRule"/>
</dbReference>
<dbReference type="CDD" id="cd00496">
    <property type="entry name" value="PheRS_alpha_core"/>
    <property type="match status" value="1"/>
</dbReference>
<dbReference type="FunFam" id="3.30.930.10:FF:000003">
    <property type="entry name" value="Phenylalanine--tRNA ligase alpha subunit"/>
    <property type="match status" value="1"/>
</dbReference>
<dbReference type="Gene3D" id="3.30.930.10">
    <property type="entry name" value="Bira Bifunctional Protein, Domain 2"/>
    <property type="match status" value="1"/>
</dbReference>
<dbReference type="HAMAP" id="MF_00281">
    <property type="entry name" value="Phe_tRNA_synth_alpha1"/>
    <property type="match status" value="1"/>
</dbReference>
<dbReference type="InterPro" id="IPR006195">
    <property type="entry name" value="aa-tRNA-synth_II"/>
</dbReference>
<dbReference type="InterPro" id="IPR045864">
    <property type="entry name" value="aa-tRNA-synth_II/BPL/LPL"/>
</dbReference>
<dbReference type="InterPro" id="IPR004529">
    <property type="entry name" value="Phe-tRNA-synth_IIc_asu"/>
</dbReference>
<dbReference type="InterPro" id="IPR004188">
    <property type="entry name" value="Phe-tRNA_ligase_II_N"/>
</dbReference>
<dbReference type="InterPro" id="IPR022911">
    <property type="entry name" value="Phe_tRNA_ligase_alpha1_bac"/>
</dbReference>
<dbReference type="InterPro" id="IPR002319">
    <property type="entry name" value="Phenylalanyl-tRNA_Synthase"/>
</dbReference>
<dbReference type="InterPro" id="IPR010978">
    <property type="entry name" value="tRNA-bd_arm"/>
</dbReference>
<dbReference type="NCBIfam" id="TIGR00468">
    <property type="entry name" value="pheS"/>
    <property type="match status" value="1"/>
</dbReference>
<dbReference type="PANTHER" id="PTHR11538:SF41">
    <property type="entry name" value="PHENYLALANINE--TRNA LIGASE, MITOCHONDRIAL"/>
    <property type="match status" value="1"/>
</dbReference>
<dbReference type="PANTHER" id="PTHR11538">
    <property type="entry name" value="PHENYLALANYL-TRNA SYNTHETASE"/>
    <property type="match status" value="1"/>
</dbReference>
<dbReference type="Pfam" id="PF02912">
    <property type="entry name" value="Phe_tRNA-synt_N"/>
    <property type="match status" value="1"/>
</dbReference>
<dbReference type="Pfam" id="PF01409">
    <property type="entry name" value="tRNA-synt_2d"/>
    <property type="match status" value="1"/>
</dbReference>
<dbReference type="SUPFAM" id="SSF55681">
    <property type="entry name" value="Class II aaRS and biotin synthetases"/>
    <property type="match status" value="1"/>
</dbReference>
<dbReference type="SUPFAM" id="SSF46589">
    <property type="entry name" value="tRNA-binding arm"/>
    <property type="match status" value="1"/>
</dbReference>
<dbReference type="PROSITE" id="PS50862">
    <property type="entry name" value="AA_TRNA_LIGASE_II"/>
    <property type="match status" value="1"/>
</dbReference>
<sequence>MRQKLEEIKNSAINELKTTLSKDQLEAIRVKYLGKKGELTQILRGMGALSQEERPIVGKVANEVRSYIEETIKEAFSDIKNKEKSIRLENETIDITMPGKKQAVGKRHPLDLTLESMKDIFISMGFTIEEGPEVELDKYNFEALNIPKNHPARGEQDTFYINDNLVLRTQTSPIQIRTMENQKPPIKMIAPGKVYRSDSVDATHSPIFYQMEGLVVDKGITFSDLKGTLELFAKRMFGDKVKTKFRPHHFPFTEPSAEMDATCFVCNGEGCKVCKGSGWIELLGCGMVHPQVLRNCNIDPEVYSGFAFGFGVDRMVMMKYGIDDIRLLYESDMRFLNQF</sequence>
<protein>
    <recommendedName>
        <fullName evidence="1">Phenylalanine--tRNA ligase alpha subunit</fullName>
        <ecNumber evidence="1">6.1.1.20</ecNumber>
    </recommendedName>
    <alternativeName>
        <fullName evidence="1">Phenylalanyl-tRNA synthetase alpha subunit</fullName>
        <shortName evidence="1">PheRS</shortName>
    </alternativeName>
</protein>
<evidence type="ECO:0000255" key="1">
    <source>
        <dbReference type="HAMAP-Rule" id="MF_00281"/>
    </source>
</evidence>
<reference key="1">
    <citation type="journal article" date="2007" name="PLoS ONE">
        <title>Analysis of the neurotoxin complex genes in Clostridium botulinum A1-A4 and B1 strains: BoNT/A3, /Ba4 and /B1 clusters are located within plasmids.</title>
        <authorList>
            <person name="Smith T.J."/>
            <person name="Hill K.K."/>
            <person name="Foley B.T."/>
            <person name="Detter J.C."/>
            <person name="Munk A.C."/>
            <person name="Bruce D.C."/>
            <person name="Doggett N.A."/>
            <person name="Smith L.A."/>
            <person name="Marks J.D."/>
            <person name="Xie G."/>
            <person name="Brettin T.S."/>
        </authorList>
    </citation>
    <scope>NUCLEOTIDE SEQUENCE [LARGE SCALE GENOMIC DNA]</scope>
    <source>
        <strain>ATCC 19397 / Type A</strain>
    </source>
</reference>
<name>SYFA_CLOB1</name>
<organism>
    <name type="scientific">Clostridium botulinum (strain ATCC 19397 / Type A)</name>
    <dbReference type="NCBI Taxonomy" id="441770"/>
    <lineage>
        <taxon>Bacteria</taxon>
        <taxon>Bacillati</taxon>
        <taxon>Bacillota</taxon>
        <taxon>Clostridia</taxon>
        <taxon>Eubacteriales</taxon>
        <taxon>Clostridiaceae</taxon>
        <taxon>Clostridium</taxon>
    </lineage>
</organism>
<keyword id="KW-0030">Aminoacyl-tRNA synthetase</keyword>
<keyword id="KW-0067">ATP-binding</keyword>
<keyword id="KW-0963">Cytoplasm</keyword>
<keyword id="KW-0436">Ligase</keyword>
<keyword id="KW-0460">Magnesium</keyword>
<keyword id="KW-0479">Metal-binding</keyword>
<keyword id="KW-0547">Nucleotide-binding</keyword>
<keyword id="KW-0648">Protein biosynthesis</keyword>